<gene>
    <name evidence="1" type="primary">yciB</name>
    <name type="ordered locus">BruAb1_1911</name>
</gene>
<protein>
    <recommendedName>
        <fullName evidence="1">Inner membrane-spanning protein YciB</fullName>
    </recommendedName>
</protein>
<reference key="1">
    <citation type="journal article" date="2005" name="J. Bacteriol.">
        <title>Completion of the genome sequence of Brucella abortus and comparison to the highly similar genomes of Brucella melitensis and Brucella suis.</title>
        <authorList>
            <person name="Halling S.M."/>
            <person name="Peterson-Burch B.D."/>
            <person name="Bricker B.J."/>
            <person name="Zuerner R.L."/>
            <person name="Qing Z."/>
            <person name="Li L.-L."/>
            <person name="Kapur V."/>
            <person name="Alt D.P."/>
            <person name="Olsen S.C."/>
        </authorList>
    </citation>
    <scope>NUCLEOTIDE SEQUENCE [LARGE SCALE GENOMIC DNA]</scope>
    <source>
        <strain>9-941</strain>
    </source>
</reference>
<keyword id="KW-0997">Cell inner membrane</keyword>
<keyword id="KW-1003">Cell membrane</keyword>
<keyword id="KW-0472">Membrane</keyword>
<keyword id="KW-0812">Transmembrane</keyword>
<keyword id="KW-1133">Transmembrane helix</keyword>
<dbReference type="EMBL" id="AE017223">
    <property type="protein sequence ID" value="AAX75221.1"/>
    <property type="molecule type" value="Genomic_DNA"/>
</dbReference>
<dbReference type="RefSeq" id="WP_002965003.1">
    <property type="nucleotide sequence ID" value="NC_006932.1"/>
</dbReference>
<dbReference type="SMR" id="Q57AW3"/>
<dbReference type="EnsemblBacteria" id="AAX75221">
    <property type="protein sequence ID" value="AAX75221"/>
    <property type="gene ID" value="BruAb1_1911"/>
</dbReference>
<dbReference type="KEGG" id="bmb:BruAb1_1911"/>
<dbReference type="HOGENOM" id="CLU_089554_1_1_5"/>
<dbReference type="Proteomes" id="UP000000540">
    <property type="component" value="Chromosome I"/>
</dbReference>
<dbReference type="GO" id="GO:0005886">
    <property type="term" value="C:plasma membrane"/>
    <property type="evidence" value="ECO:0007669"/>
    <property type="project" value="UniProtKB-SubCell"/>
</dbReference>
<dbReference type="HAMAP" id="MF_00189">
    <property type="entry name" value="YciB"/>
    <property type="match status" value="1"/>
</dbReference>
<dbReference type="InterPro" id="IPR006008">
    <property type="entry name" value="YciB"/>
</dbReference>
<dbReference type="NCBIfam" id="TIGR00997">
    <property type="entry name" value="ispZ"/>
    <property type="match status" value="1"/>
</dbReference>
<dbReference type="NCBIfam" id="NF001323">
    <property type="entry name" value="PRK00259.1-1"/>
    <property type="match status" value="1"/>
</dbReference>
<dbReference type="PANTHER" id="PTHR36917:SF1">
    <property type="entry name" value="INNER MEMBRANE-SPANNING PROTEIN YCIB"/>
    <property type="match status" value="1"/>
</dbReference>
<dbReference type="PANTHER" id="PTHR36917">
    <property type="entry name" value="INTRACELLULAR SEPTATION PROTEIN A-RELATED"/>
    <property type="match status" value="1"/>
</dbReference>
<dbReference type="Pfam" id="PF04279">
    <property type="entry name" value="IspA"/>
    <property type="match status" value="1"/>
</dbReference>
<evidence type="ECO:0000255" key="1">
    <source>
        <dbReference type="HAMAP-Rule" id="MF_00189"/>
    </source>
</evidence>
<organism>
    <name type="scientific">Brucella abortus biovar 1 (strain 9-941)</name>
    <dbReference type="NCBI Taxonomy" id="262698"/>
    <lineage>
        <taxon>Bacteria</taxon>
        <taxon>Pseudomonadati</taxon>
        <taxon>Pseudomonadota</taxon>
        <taxon>Alphaproteobacteria</taxon>
        <taxon>Hyphomicrobiales</taxon>
        <taxon>Brucellaceae</taxon>
        <taxon>Brucella/Ochrobactrum group</taxon>
        <taxon>Brucella</taxon>
    </lineage>
</organism>
<proteinExistence type="inferred from homology"/>
<name>YCIB_BRUAB</name>
<sequence length="220" mass="24794">MEHPVFERDPSEKSETERREVPPLLKLALELGPLLVFFFANARGEMLIERFPILGSIGAPIFLATALFMAATVIALAISWSMTRTLPIMPLVSGIVVLVFGALTLWLHNDTFIKMKPTIVNTLFGGILLGGLFFGKSLLGYVFDSAFRLDAEGWRKLTLRWGLFFIFLAIVNEIVWRNFSTDTWVSFKVWGIMPITIVFTLLQMPLIQKHSLTDEENTAS</sequence>
<feature type="chain" id="PRO_1000020987" description="Inner membrane-spanning protein YciB">
    <location>
        <begin position="1"/>
        <end position="220"/>
    </location>
</feature>
<feature type="transmembrane region" description="Helical" evidence="1">
    <location>
        <begin position="20"/>
        <end position="40"/>
    </location>
</feature>
<feature type="transmembrane region" description="Helical" evidence="1">
    <location>
        <begin position="57"/>
        <end position="77"/>
    </location>
</feature>
<feature type="transmembrane region" description="Helical" evidence="1">
    <location>
        <begin position="86"/>
        <end position="106"/>
    </location>
</feature>
<feature type="transmembrane region" description="Helical" evidence="1">
    <location>
        <begin position="123"/>
        <end position="143"/>
    </location>
</feature>
<feature type="transmembrane region" description="Helical" evidence="1">
    <location>
        <begin position="156"/>
        <end position="176"/>
    </location>
</feature>
<feature type="transmembrane region" description="Helical" evidence="1">
    <location>
        <begin position="187"/>
        <end position="207"/>
    </location>
</feature>
<accession>Q57AW3</accession>
<comment type="function">
    <text evidence="1">Plays a role in cell envelope biogenesis, maintenance of cell envelope integrity and membrane homeostasis.</text>
</comment>
<comment type="subcellular location">
    <subcellularLocation>
        <location evidence="1">Cell inner membrane</location>
        <topology evidence="1">Multi-pass membrane protein</topology>
    </subcellularLocation>
</comment>
<comment type="similarity">
    <text evidence="1">Belongs to the YciB family.</text>
</comment>